<protein>
    <recommendedName>
        <fullName evidence="1">1,4-alpha-glucan branching enzyme GlgB</fullName>
        <ecNumber evidence="1">2.4.1.18</ecNumber>
    </recommendedName>
    <alternativeName>
        <fullName evidence="1">1,4-alpha-D-glucan:1,4-alpha-D-glucan 6-glucosyl-transferase</fullName>
    </alternativeName>
    <alternativeName>
        <fullName evidence="1">Alpha-(1-&gt;4)-glucan branching enzyme</fullName>
    </alternativeName>
    <alternativeName>
        <fullName evidence="1">Glycogen branching enzyme</fullName>
        <shortName evidence="1">BE</shortName>
    </alternativeName>
</protein>
<evidence type="ECO:0000255" key="1">
    <source>
        <dbReference type="HAMAP-Rule" id="MF_00685"/>
    </source>
</evidence>
<accession>Q6A8Q7</accession>
<name>GLGB_CUTAK</name>
<gene>
    <name evidence="1" type="primary">glgB</name>
    <name type="ordered locus">PPA1111</name>
</gene>
<proteinExistence type="inferred from homology"/>
<sequence length="644" mass="73563">MAHDEFGGLTGWDLEGFHSGGDTEVWKRLGSHVVTIDDDERGPITGTRFAVWAPNAQAVEVISDFNWWTGDRMRLIPGSGVWGTFVEGVDEGTLYKFRIQDQWGTWHEKVDPMARYSEQAPQNASIVTETHYEWNDDEWIARREASRAHAEPMSVYEVHLGGWRHGLSYRELADQLVSYVTWQGYTHVEFMPLAEHPFAPSWGYQVTGYFSPTSRYGSPDDLRYLIDKLHQAGIGVIMDWVPGHFPKDDWALGRFDGTALYEHADPRQGEHKDWGTYIFNYGRNEVKSFLVSSALYWISEFHADGLRVDAVASMLYLDYSREEGQWVPNKYGGRENLEAIDFLRYVNSHLYSRHPGILMIAEESTSFPGVTKPVDDGGLGFGFKWNMGWMNDSLRYLELNPFHRQYHHGEMTFAMVYQYSENFILPISHDEVVHGKGSMITKIPGDDWQQFASLRAFYSYMWSFPGKQLVFMGQEFGQRHEFDESVSLEWFVADLWGHGGLKRLFRDLNKIYKENPALWQLDSDPRGFEWINADDAGNNLFSWLRRSDDGSTIACFTNFSPNPQTDYRIDLPMEGVWTEILNTDSLEYDGTGEFGNLGQIVAAPLPAPDRLRAVATVCVPPMGSVWLRHNPSATAALPGDPGVQ</sequence>
<dbReference type="EC" id="2.4.1.18" evidence="1"/>
<dbReference type="EMBL" id="AE017283">
    <property type="protein sequence ID" value="AAT82859.1"/>
    <property type="molecule type" value="Genomic_DNA"/>
</dbReference>
<dbReference type="RefSeq" id="WP_002515006.1">
    <property type="nucleotide sequence ID" value="NZ_CP025935.1"/>
</dbReference>
<dbReference type="SMR" id="Q6A8Q7"/>
<dbReference type="CAZy" id="CBM48">
    <property type="family name" value="Carbohydrate-Binding Module Family 48"/>
</dbReference>
<dbReference type="CAZy" id="GH13">
    <property type="family name" value="Glycoside Hydrolase Family 13"/>
</dbReference>
<dbReference type="EnsemblBacteria" id="AAT82859">
    <property type="protein sequence ID" value="AAT82859"/>
    <property type="gene ID" value="PPA1111"/>
</dbReference>
<dbReference type="GeneID" id="92857081"/>
<dbReference type="KEGG" id="pac:PPA1111"/>
<dbReference type="eggNOG" id="COG0296">
    <property type="taxonomic scope" value="Bacteria"/>
</dbReference>
<dbReference type="HOGENOM" id="CLU_004245_3_2_11"/>
<dbReference type="UniPathway" id="UPA00164"/>
<dbReference type="Proteomes" id="UP000000603">
    <property type="component" value="Chromosome"/>
</dbReference>
<dbReference type="GO" id="GO:0005829">
    <property type="term" value="C:cytosol"/>
    <property type="evidence" value="ECO:0007669"/>
    <property type="project" value="TreeGrafter"/>
</dbReference>
<dbReference type="GO" id="GO:0003844">
    <property type="term" value="F:1,4-alpha-glucan branching enzyme activity"/>
    <property type="evidence" value="ECO:0007669"/>
    <property type="project" value="UniProtKB-UniRule"/>
</dbReference>
<dbReference type="GO" id="GO:0043169">
    <property type="term" value="F:cation binding"/>
    <property type="evidence" value="ECO:0007669"/>
    <property type="project" value="InterPro"/>
</dbReference>
<dbReference type="GO" id="GO:0004553">
    <property type="term" value="F:hydrolase activity, hydrolyzing O-glycosyl compounds"/>
    <property type="evidence" value="ECO:0007669"/>
    <property type="project" value="InterPro"/>
</dbReference>
<dbReference type="GO" id="GO:0005978">
    <property type="term" value="P:glycogen biosynthetic process"/>
    <property type="evidence" value="ECO:0007669"/>
    <property type="project" value="UniProtKB-UniRule"/>
</dbReference>
<dbReference type="CDD" id="cd11322">
    <property type="entry name" value="AmyAc_Glg_BE"/>
    <property type="match status" value="1"/>
</dbReference>
<dbReference type="CDD" id="cd02855">
    <property type="entry name" value="E_set_GBE_prok_N"/>
    <property type="match status" value="1"/>
</dbReference>
<dbReference type="FunFam" id="3.20.20.80:FF:000003">
    <property type="entry name" value="1,4-alpha-glucan branching enzyme GlgB"/>
    <property type="match status" value="1"/>
</dbReference>
<dbReference type="Gene3D" id="3.20.20.80">
    <property type="entry name" value="Glycosidases"/>
    <property type="match status" value="1"/>
</dbReference>
<dbReference type="Gene3D" id="2.60.40.1180">
    <property type="entry name" value="Golgi alpha-mannosidase II"/>
    <property type="match status" value="1"/>
</dbReference>
<dbReference type="Gene3D" id="2.60.40.10">
    <property type="entry name" value="Immunoglobulins"/>
    <property type="match status" value="1"/>
</dbReference>
<dbReference type="HAMAP" id="MF_00685">
    <property type="entry name" value="GlgB"/>
    <property type="match status" value="1"/>
</dbReference>
<dbReference type="InterPro" id="IPR006048">
    <property type="entry name" value="A-amylase/branching_C"/>
</dbReference>
<dbReference type="InterPro" id="IPR037439">
    <property type="entry name" value="Branching_enzy"/>
</dbReference>
<dbReference type="InterPro" id="IPR006407">
    <property type="entry name" value="GlgB"/>
</dbReference>
<dbReference type="InterPro" id="IPR044143">
    <property type="entry name" value="GlgB_N_E_set_prok"/>
</dbReference>
<dbReference type="InterPro" id="IPR006047">
    <property type="entry name" value="Glyco_hydro_13_cat_dom"/>
</dbReference>
<dbReference type="InterPro" id="IPR004193">
    <property type="entry name" value="Glyco_hydro_13_N"/>
</dbReference>
<dbReference type="InterPro" id="IPR013780">
    <property type="entry name" value="Glyco_hydro_b"/>
</dbReference>
<dbReference type="InterPro" id="IPR017853">
    <property type="entry name" value="Glycoside_hydrolase_SF"/>
</dbReference>
<dbReference type="InterPro" id="IPR013783">
    <property type="entry name" value="Ig-like_fold"/>
</dbReference>
<dbReference type="InterPro" id="IPR014756">
    <property type="entry name" value="Ig_E-set"/>
</dbReference>
<dbReference type="NCBIfam" id="TIGR01515">
    <property type="entry name" value="branching_enzym"/>
    <property type="match status" value="1"/>
</dbReference>
<dbReference type="NCBIfam" id="NF003811">
    <property type="entry name" value="PRK05402.1"/>
    <property type="match status" value="1"/>
</dbReference>
<dbReference type="NCBIfam" id="NF008967">
    <property type="entry name" value="PRK12313.1"/>
    <property type="match status" value="1"/>
</dbReference>
<dbReference type="PANTHER" id="PTHR43651">
    <property type="entry name" value="1,4-ALPHA-GLUCAN-BRANCHING ENZYME"/>
    <property type="match status" value="1"/>
</dbReference>
<dbReference type="PANTHER" id="PTHR43651:SF3">
    <property type="entry name" value="1,4-ALPHA-GLUCAN-BRANCHING ENZYME"/>
    <property type="match status" value="1"/>
</dbReference>
<dbReference type="Pfam" id="PF00128">
    <property type="entry name" value="Alpha-amylase"/>
    <property type="match status" value="2"/>
</dbReference>
<dbReference type="Pfam" id="PF02806">
    <property type="entry name" value="Alpha-amylase_C"/>
    <property type="match status" value="1"/>
</dbReference>
<dbReference type="Pfam" id="PF02922">
    <property type="entry name" value="CBM_48"/>
    <property type="match status" value="1"/>
</dbReference>
<dbReference type="PIRSF" id="PIRSF000463">
    <property type="entry name" value="GlgB"/>
    <property type="match status" value="1"/>
</dbReference>
<dbReference type="SMART" id="SM00642">
    <property type="entry name" value="Aamy"/>
    <property type="match status" value="1"/>
</dbReference>
<dbReference type="SUPFAM" id="SSF51445">
    <property type="entry name" value="(Trans)glycosidases"/>
    <property type="match status" value="1"/>
</dbReference>
<dbReference type="SUPFAM" id="SSF81296">
    <property type="entry name" value="E set domains"/>
    <property type="match status" value="1"/>
</dbReference>
<dbReference type="SUPFAM" id="SSF51011">
    <property type="entry name" value="Glycosyl hydrolase domain"/>
    <property type="match status" value="1"/>
</dbReference>
<feature type="chain" id="PRO_0000188726" description="1,4-alpha-glucan branching enzyme GlgB">
    <location>
        <begin position="1"/>
        <end position="644"/>
    </location>
</feature>
<feature type="active site" description="Nucleophile" evidence="1">
    <location>
        <position position="309"/>
    </location>
</feature>
<feature type="active site" description="Proton donor" evidence="1">
    <location>
        <position position="362"/>
    </location>
</feature>
<comment type="function">
    <text evidence="1">Catalyzes the formation of the alpha-1,6-glucosidic linkages in glycogen by scission of a 1,4-alpha-linked oligosaccharide from growing alpha-1,4-glucan chains and the subsequent attachment of the oligosaccharide to the alpha-1,6 position.</text>
</comment>
<comment type="catalytic activity">
    <reaction evidence="1">
        <text>Transfers a segment of a (1-&gt;4)-alpha-D-glucan chain to a primary hydroxy group in a similar glucan chain.</text>
        <dbReference type="EC" id="2.4.1.18"/>
    </reaction>
</comment>
<comment type="pathway">
    <text evidence="1">Glycan biosynthesis; glycogen biosynthesis.</text>
</comment>
<comment type="subunit">
    <text evidence="1">Monomer.</text>
</comment>
<comment type="similarity">
    <text evidence="1">Belongs to the glycosyl hydrolase 13 family. GlgB subfamily.</text>
</comment>
<organism>
    <name type="scientific">Cutibacterium acnes (strain DSM 16379 / KPA171202)</name>
    <name type="common">Propionibacterium acnes</name>
    <dbReference type="NCBI Taxonomy" id="267747"/>
    <lineage>
        <taxon>Bacteria</taxon>
        <taxon>Bacillati</taxon>
        <taxon>Actinomycetota</taxon>
        <taxon>Actinomycetes</taxon>
        <taxon>Propionibacteriales</taxon>
        <taxon>Propionibacteriaceae</taxon>
        <taxon>Cutibacterium</taxon>
    </lineage>
</organism>
<reference key="1">
    <citation type="journal article" date="2004" name="Science">
        <title>The complete genome sequence of Propionibacterium acnes, a commensal of human skin.</title>
        <authorList>
            <person name="Brueggemann H."/>
            <person name="Henne A."/>
            <person name="Hoster F."/>
            <person name="Liesegang H."/>
            <person name="Wiezer A."/>
            <person name="Strittmatter A."/>
            <person name="Hujer S."/>
            <person name="Duerre P."/>
            <person name="Gottschalk G."/>
        </authorList>
    </citation>
    <scope>NUCLEOTIDE SEQUENCE [LARGE SCALE GENOMIC DNA]</scope>
    <source>
        <strain>DSM 16379 / KPA171202</strain>
    </source>
</reference>
<keyword id="KW-0119">Carbohydrate metabolism</keyword>
<keyword id="KW-0320">Glycogen biosynthesis</keyword>
<keyword id="KW-0321">Glycogen metabolism</keyword>
<keyword id="KW-0328">Glycosyltransferase</keyword>
<keyword id="KW-0808">Transferase</keyword>